<protein>
    <recommendedName>
        <fullName evidence="1">ATP synthase subunit beta</fullName>
        <ecNumber evidence="1">7.1.2.2</ecNumber>
    </recommendedName>
    <alternativeName>
        <fullName evidence="1">ATP synthase F1 sector subunit beta</fullName>
    </alternativeName>
    <alternativeName>
        <fullName evidence="1">F-ATPase subunit beta</fullName>
    </alternativeName>
</protein>
<reference key="1">
    <citation type="journal article" date="2004" name="Proc. Natl. Acad. Sci. U.S.A.">
        <title>Genome sequence of the deep-sea gamma-proteobacterium Idiomarina loihiensis reveals amino acid fermentation as a source of carbon and energy.</title>
        <authorList>
            <person name="Hou S."/>
            <person name="Saw J.H."/>
            <person name="Lee K.S."/>
            <person name="Freitas T.A."/>
            <person name="Belisle C."/>
            <person name="Kawarabayasi Y."/>
            <person name="Donachie S.P."/>
            <person name="Pikina A."/>
            <person name="Galperin M.Y."/>
            <person name="Koonin E.V."/>
            <person name="Makarova K.S."/>
            <person name="Omelchenko M.V."/>
            <person name="Sorokin A."/>
            <person name="Wolf Y.I."/>
            <person name="Li Q.X."/>
            <person name="Keum Y.S."/>
            <person name="Campbell S."/>
            <person name="Denery J."/>
            <person name="Aizawa S."/>
            <person name="Shibata S."/>
            <person name="Malahoff A."/>
            <person name="Alam M."/>
        </authorList>
    </citation>
    <scope>NUCLEOTIDE SEQUENCE [LARGE SCALE GENOMIC DNA]</scope>
    <source>
        <strain>ATCC BAA-735 / DSM 15497 / L2-TR</strain>
    </source>
</reference>
<proteinExistence type="inferred from homology"/>
<name>ATPB_IDILO</name>
<organism>
    <name type="scientific">Idiomarina loihiensis (strain ATCC BAA-735 / DSM 15497 / L2-TR)</name>
    <dbReference type="NCBI Taxonomy" id="283942"/>
    <lineage>
        <taxon>Bacteria</taxon>
        <taxon>Pseudomonadati</taxon>
        <taxon>Pseudomonadota</taxon>
        <taxon>Gammaproteobacteria</taxon>
        <taxon>Alteromonadales</taxon>
        <taxon>Idiomarinaceae</taxon>
        <taxon>Idiomarina</taxon>
    </lineage>
</organism>
<dbReference type="EC" id="7.1.2.2" evidence="1"/>
<dbReference type="EMBL" id="AE017340">
    <property type="protein sequence ID" value="AAV83451.1"/>
    <property type="molecule type" value="Genomic_DNA"/>
</dbReference>
<dbReference type="RefSeq" id="WP_011235842.1">
    <property type="nucleotide sequence ID" value="NC_006512.1"/>
</dbReference>
<dbReference type="SMR" id="Q5QZI6"/>
<dbReference type="STRING" id="283942.IL2619"/>
<dbReference type="GeneID" id="41337818"/>
<dbReference type="KEGG" id="ilo:IL2619"/>
<dbReference type="eggNOG" id="COG0055">
    <property type="taxonomic scope" value="Bacteria"/>
</dbReference>
<dbReference type="HOGENOM" id="CLU_022398_0_2_6"/>
<dbReference type="OrthoDB" id="9801639at2"/>
<dbReference type="Proteomes" id="UP000001171">
    <property type="component" value="Chromosome"/>
</dbReference>
<dbReference type="GO" id="GO:0005886">
    <property type="term" value="C:plasma membrane"/>
    <property type="evidence" value="ECO:0007669"/>
    <property type="project" value="UniProtKB-SubCell"/>
</dbReference>
<dbReference type="GO" id="GO:0045259">
    <property type="term" value="C:proton-transporting ATP synthase complex"/>
    <property type="evidence" value="ECO:0007669"/>
    <property type="project" value="UniProtKB-KW"/>
</dbReference>
<dbReference type="GO" id="GO:0005524">
    <property type="term" value="F:ATP binding"/>
    <property type="evidence" value="ECO:0007669"/>
    <property type="project" value="UniProtKB-UniRule"/>
</dbReference>
<dbReference type="GO" id="GO:0046933">
    <property type="term" value="F:proton-transporting ATP synthase activity, rotational mechanism"/>
    <property type="evidence" value="ECO:0007669"/>
    <property type="project" value="UniProtKB-UniRule"/>
</dbReference>
<dbReference type="CDD" id="cd18110">
    <property type="entry name" value="ATP-synt_F1_beta_C"/>
    <property type="match status" value="1"/>
</dbReference>
<dbReference type="CDD" id="cd18115">
    <property type="entry name" value="ATP-synt_F1_beta_N"/>
    <property type="match status" value="1"/>
</dbReference>
<dbReference type="CDD" id="cd01133">
    <property type="entry name" value="F1-ATPase_beta_CD"/>
    <property type="match status" value="1"/>
</dbReference>
<dbReference type="FunFam" id="1.10.1140.10:FF:000001">
    <property type="entry name" value="ATP synthase subunit beta"/>
    <property type="match status" value="1"/>
</dbReference>
<dbReference type="FunFam" id="2.40.10.170:FF:000003">
    <property type="entry name" value="ATP synthase subunit beta"/>
    <property type="match status" value="1"/>
</dbReference>
<dbReference type="FunFam" id="3.40.50.300:FF:000004">
    <property type="entry name" value="ATP synthase subunit beta"/>
    <property type="match status" value="1"/>
</dbReference>
<dbReference type="Gene3D" id="2.40.10.170">
    <property type="match status" value="1"/>
</dbReference>
<dbReference type="Gene3D" id="1.10.1140.10">
    <property type="entry name" value="Bovine Mitochondrial F1-atpase, Atp Synthase Beta Chain, Chain D, domain 3"/>
    <property type="match status" value="1"/>
</dbReference>
<dbReference type="Gene3D" id="3.40.50.300">
    <property type="entry name" value="P-loop containing nucleotide triphosphate hydrolases"/>
    <property type="match status" value="1"/>
</dbReference>
<dbReference type="HAMAP" id="MF_01347">
    <property type="entry name" value="ATP_synth_beta_bact"/>
    <property type="match status" value="1"/>
</dbReference>
<dbReference type="InterPro" id="IPR055190">
    <property type="entry name" value="ATP-synt_VA_C"/>
</dbReference>
<dbReference type="InterPro" id="IPR005722">
    <property type="entry name" value="ATP_synth_F1_bsu"/>
</dbReference>
<dbReference type="InterPro" id="IPR020003">
    <property type="entry name" value="ATPase_a/bsu_AS"/>
</dbReference>
<dbReference type="InterPro" id="IPR050053">
    <property type="entry name" value="ATPase_alpha/beta_chains"/>
</dbReference>
<dbReference type="InterPro" id="IPR004100">
    <property type="entry name" value="ATPase_F1/V1/A1_a/bsu_N"/>
</dbReference>
<dbReference type="InterPro" id="IPR036121">
    <property type="entry name" value="ATPase_F1/V1/A1_a/bsu_N_sf"/>
</dbReference>
<dbReference type="InterPro" id="IPR000194">
    <property type="entry name" value="ATPase_F1/V1/A1_a/bsu_nucl-bd"/>
</dbReference>
<dbReference type="InterPro" id="IPR024034">
    <property type="entry name" value="ATPase_F1/V1_b/a_C"/>
</dbReference>
<dbReference type="InterPro" id="IPR027417">
    <property type="entry name" value="P-loop_NTPase"/>
</dbReference>
<dbReference type="NCBIfam" id="TIGR01039">
    <property type="entry name" value="atpD"/>
    <property type="match status" value="1"/>
</dbReference>
<dbReference type="PANTHER" id="PTHR15184">
    <property type="entry name" value="ATP SYNTHASE"/>
    <property type="match status" value="1"/>
</dbReference>
<dbReference type="PANTHER" id="PTHR15184:SF71">
    <property type="entry name" value="ATP SYNTHASE SUBUNIT BETA, MITOCHONDRIAL"/>
    <property type="match status" value="1"/>
</dbReference>
<dbReference type="Pfam" id="PF00006">
    <property type="entry name" value="ATP-synt_ab"/>
    <property type="match status" value="1"/>
</dbReference>
<dbReference type="Pfam" id="PF02874">
    <property type="entry name" value="ATP-synt_ab_N"/>
    <property type="match status" value="1"/>
</dbReference>
<dbReference type="Pfam" id="PF22919">
    <property type="entry name" value="ATP-synt_VA_C"/>
    <property type="match status" value="1"/>
</dbReference>
<dbReference type="SUPFAM" id="SSF47917">
    <property type="entry name" value="C-terminal domain of alpha and beta subunits of F1 ATP synthase"/>
    <property type="match status" value="1"/>
</dbReference>
<dbReference type="SUPFAM" id="SSF50615">
    <property type="entry name" value="N-terminal domain of alpha and beta subunits of F1 ATP synthase"/>
    <property type="match status" value="1"/>
</dbReference>
<dbReference type="SUPFAM" id="SSF52540">
    <property type="entry name" value="P-loop containing nucleoside triphosphate hydrolases"/>
    <property type="match status" value="1"/>
</dbReference>
<dbReference type="PROSITE" id="PS00152">
    <property type="entry name" value="ATPASE_ALPHA_BETA"/>
    <property type="match status" value="1"/>
</dbReference>
<evidence type="ECO:0000255" key="1">
    <source>
        <dbReference type="HAMAP-Rule" id="MF_01347"/>
    </source>
</evidence>
<gene>
    <name evidence="1" type="primary">atpD</name>
    <name type="ordered locus">IL2619</name>
</gene>
<accession>Q5QZI6</accession>
<comment type="function">
    <text evidence="1">Produces ATP from ADP in the presence of a proton gradient across the membrane. The catalytic sites are hosted primarily by the beta subunits.</text>
</comment>
<comment type="catalytic activity">
    <reaction evidence="1">
        <text>ATP + H2O + 4 H(+)(in) = ADP + phosphate + 5 H(+)(out)</text>
        <dbReference type="Rhea" id="RHEA:57720"/>
        <dbReference type="ChEBI" id="CHEBI:15377"/>
        <dbReference type="ChEBI" id="CHEBI:15378"/>
        <dbReference type="ChEBI" id="CHEBI:30616"/>
        <dbReference type="ChEBI" id="CHEBI:43474"/>
        <dbReference type="ChEBI" id="CHEBI:456216"/>
        <dbReference type="EC" id="7.1.2.2"/>
    </reaction>
</comment>
<comment type="subunit">
    <text evidence="1">F-type ATPases have 2 components, CF(1) - the catalytic core - and CF(0) - the membrane proton channel. CF(1) has five subunits: alpha(3), beta(3), gamma(1), delta(1), epsilon(1). CF(0) has three main subunits: a(1), b(2) and c(9-12). The alpha and beta chains form an alternating ring which encloses part of the gamma chain. CF(1) is attached to CF(0) by a central stalk formed by the gamma and epsilon chains, while a peripheral stalk is formed by the delta and b chains.</text>
</comment>
<comment type="subcellular location">
    <subcellularLocation>
        <location evidence="1">Cell inner membrane</location>
        <topology evidence="1">Peripheral membrane protein</topology>
    </subcellularLocation>
</comment>
<comment type="similarity">
    <text evidence="1">Belongs to the ATPase alpha/beta chains family.</text>
</comment>
<feature type="chain" id="PRO_0000254276" description="ATP synthase subunit beta">
    <location>
        <begin position="1"/>
        <end position="461"/>
    </location>
</feature>
<feature type="binding site" evidence="1">
    <location>
        <begin position="151"/>
        <end position="158"/>
    </location>
    <ligand>
        <name>ATP</name>
        <dbReference type="ChEBI" id="CHEBI:30616"/>
    </ligand>
</feature>
<sequence length="461" mass="49964">MSQGKVVQIIGAVVDLEFPQDAVPKVYDALKVTEGGLEGLVLEVQQQLGGGIVRAIAMGTTDGLRRGITAKNTGESIMVPVGKKTLGRIMDVLGNPIDEAGPIGEEEKMSIHRAAPSYEEQSNTNELLETGIKVIDLICPFAKGGKVGLFGGAGVGKTVNMMELIRNIAIEHSGYSVFAGVGERTREGNDFYHEMNDSNVLDKVSLVYGQMNEPPGNRLRVALTGLTIAEKFRDEGRDVLFFVDNIYRYTLAGTEVSALLGRMPSAVGYQPTLAEEMGVLQERITSTKTGSITSVQAVYVPADDLTDPSPATTFAHLDATVVLNRDIASLGIYPAVDPLDSTSRQLDPQVIGDEHYDTAMGVQEVLQRYKELKDIIAILGMDELSEEDKLSVSRARKIQRFLSQPFFVAEVFTGAPGKYVSLKDTIAGFKGILDGDYDDMPEQAFYMVGTIEEAVEKAKNL</sequence>
<keyword id="KW-0066">ATP synthesis</keyword>
<keyword id="KW-0067">ATP-binding</keyword>
<keyword id="KW-0997">Cell inner membrane</keyword>
<keyword id="KW-1003">Cell membrane</keyword>
<keyword id="KW-0139">CF(1)</keyword>
<keyword id="KW-0375">Hydrogen ion transport</keyword>
<keyword id="KW-0406">Ion transport</keyword>
<keyword id="KW-0472">Membrane</keyword>
<keyword id="KW-0547">Nucleotide-binding</keyword>
<keyword id="KW-1185">Reference proteome</keyword>
<keyword id="KW-1278">Translocase</keyword>
<keyword id="KW-0813">Transport</keyword>